<feature type="chain" id="PRO_0000358947" description="Acetyl-coenzyme A carboxylase carboxyl transferase subunit beta">
    <location>
        <begin position="1"/>
        <end position="294"/>
    </location>
</feature>
<feature type="domain" description="CoA carboxyltransferase N-terminal" evidence="2">
    <location>
        <begin position="25"/>
        <end position="294"/>
    </location>
</feature>
<feature type="zinc finger region" description="C4-type" evidence="1">
    <location>
        <begin position="29"/>
        <end position="51"/>
    </location>
</feature>
<feature type="binding site" evidence="1">
    <location>
        <position position="29"/>
    </location>
    <ligand>
        <name>Zn(2+)</name>
        <dbReference type="ChEBI" id="CHEBI:29105"/>
    </ligand>
</feature>
<feature type="binding site" evidence="1">
    <location>
        <position position="32"/>
    </location>
    <ligand>
        <name>Zn(2+)</name>
        <dbReference type="ChEBI" id="CHEBI:29105"/>
    </ligand>
</feature>
<feature type="binding site" evidence="1">
    <location>
        <position position="48"/>
    </location>
    <ligand>
        <name>Zn(2+)</name>
        <dbReference type="ChEBI" id="CHEBI:29105"/>
    </ligand>
</feature>
<feature type="binding site" evidence="1">
    <location>
        <position position="51"/>
    </location>
    <ligand>
        <name>Zn(2+)</name>
        <dbReference type="ChEBI" id="CHEBI:29105"/>
    </ligand>
</feature>
<dbReference type="EC" id="2.1.3.15" evidence="1"/>
<dbReference type="EMBL" id="CP000746">
    <property type="protein sequence ID" value="ABR74741.1"/>
    <property type="molecule type" value="Genomic_DNA"/>
</dbReference>
<dbReference type="RefSeq" id="WP_012073118.1">
    <property type="nucleotide sequence ID" value="NC_009655.1"/>
</dbReference>
<dbReference type="SMR" id="A6VP44"/>
<dbReference type="STRING" id="339671.Asuc_1381"/>
<dbReference type="KEGG" id="asu:Asuc_1381"/>
<dbReference type="eggNOG" id="COG0777">
    <property type="taxonomic scope" value="Bacteria"/>
</dbReference>
<dbReference type="HOGENOM" id="CLU_015486_1_0_6"/>
<dbReference type="OrthoDB" id="9772975at2"/>
<dbReference type="UniPathway" id="UPA00655">
    <property type="reaction ID" value="UER00711"/>
</dbReference>
<dbReference type="Proteomes" id="UP000001114">
    <property type="component" value="Chromosome"/>
</dbReference>
<dbReference type="GO" id="GO:0009329">
    <property type="term" value="C:acetate CoA-transferase complex"/>
    <property type="evidence" value="ECO:0007669"/>
    <property type="project" value="TreeGrafter"/>
</dbReference>
<dbReference type="GO" id="GO:0003989">
    <property type="term" value="F:acetyl-CoA carboxylase activity"/>
    <property type="evidence" value="ECO:0007669"/>
    <property type="project" value="InterPro"/>
</dbReference>
<dbReference type="GO" id="GO:0005524">
    <property type="term" value="F:ATP binding"/>
    <property type="evidence" value="ECO:0007669"/>
    <property type="project" value="UniProtKB-KW"/>
</dbReference>
<dbReference type="GO" id="GO:0016743">
    <property type="term" value="F:carboxyl- or carbamoyltransferase activity"/>
    <property type="evidence" value="ECO:0007669"/>
    <property type="project" value="UniProtKB-UniRule"/>
</dbReference>
<dbReference type="GO" id="GO:0008270">
    <property type="term" value="F:zinc ion binding"/>
    <property type="evidence" value="ECO:0007669"/>
    <property type="project" value="UniProtKB-UniRule"/>
</dbReference>
<dbReference type="GO" id="GO:0006633">
    <property type="term" value="P:fatty acid biosynthetic process"/>
    <property type="evidence" value="ECO:0007669"/>
    <property type="project" value="UniProtKB-KW"/>
</dbReference>
<dbReference type="GO" id="GO:2001295">
    <property type="term" value="P:malonyl-CoA biosynthetic process"/>
    <property type="evidence" value="ECO:0007669"/>
    <property type="project" value="UniProtKB-UniRule"/>
</dbReference>
<dbReference type="Gene3D" id="3.90.226.10">
    <property type="entry name" value="2-enoyl-CoA Hydratase, Chain A, domain 1"/>
    <property type="match status" value="1"/>
</dbReference>
<dbReference type="HAMAP" id="MF_01395">
    <property type="entry name" value="AcetylCoA_CT_beta"/>
    <property type="match status" value="1"/>
</dbReference>
<dbReference type="InterPro" id="IPR034733">
    <property type="entry name" value="AcCoA_carboxyl_beta"/>
</dbReference>
<dbReference type="InterPro" id="IPR000438">
    <property type="entry name" value="Acetyl_CoA_COase_Trfase_b_su"/>
</dbReference>
<dbReference type="InterPro" id="IPR029045">
    <property type="entry name" value="ClpP/crotonase-like_dom_sf"/>
</dbReference>
<dbReference type="InterPro" id="IPR011762">
    <property type="entry name" value="COA_CT_N"/>
</dbReference>
<dbReference type="InterPro" id="IPR041010">
    <property type="entry name" value="Znf-ACC"/>
</dbReference>
<dbReference type="NCBIfam" id="TIGR00515">
    <property type="entry name" value="accD"/>
    <property type="match status" value="1"/>
</dbReference>
<dbReference type="PANTHER" id="PTHR42995">
    <property type="entry name" value="ACETYL-COENZYME A CARBOXYLASE CARBOXYL TRANSFERASE SUBUNIT BETA, CHLOROPLASTIC"/>
    <property type="match status" value="1"/>
</dbReference>
<dbReference type="PANTHER" id="PTHR42995:SF5">
    <property type="entry name" value="ACETYL-COENZYME A CARBOXYLASE CARBOXYL TRANSFERASE SUBUNIT BETA, CHLOROPLASTIC"/>
    <property type="match status" value="1"/>
</dbReference>
<dbReference type="Pfam" id="PF01039">
    <property type="entry name" value="Carboxyl_trans"/>
    <property type="match status" value="1"/>
</dbReference>
<dbReference type="Pfam" id="PF17848">
    <property type="entry name" value="Zn_ribbon_ACC"/>
    <property type="match status" value="1"/>
</dbReference>
<dbReference type="PRINTS" id="PR01070">
    <property type="entry name" value="ACCCTRFRASEB"/>
</dbReference>
<dbReference type="SUPFAM" id="SSF52096">
    <property type="entry name" value="ClpP/crotonase"/>
    <property type="match status" value="1"/>
</dbReference>
<dbReference type="PROSITE" id="PS50980">
    <property type="entry name" value="COA_CT_NTER"/>
    <property type="match status" value="1"/>
</dbReference>
<reference key="1">
    <citation type="journal article" date="2010" name="BMC Genomics">
        <title>A genomic perspective on the potential of Actinobacillus succinogenes for industrial succinate production.</title>
        <authorList>
            <person name="McKinlay J.B."/>
            <person name="Laivenieks M."/>
            <person name="Schindler B.D."/>
            <person name="McKinlay A.A."/>
            <person name="Siddaramappa S."/>
            <person name="Challacombe J.F."/>
            <person name="Lowry S.R."/>
            <person name="Clum A."/>
            <person name="Lapidus A.L."/>
            <person name="Burkhart K.B."/>
            <person name="Harkins V."/>
            <person name="Vieille C."/>
        </authorList>
    </citation>
    <scope>NUCLEOTIDE SEQUENCE [LARGE SCALE GENOMIC DNA]</scope>
    <source>
        <strain>ATCC 55618 / DSM 22257 / CCUG 43843 / 130Z</strain>
    </source>
</reference>
<accession>A6VP44</accession>
<sequence>MSWIDKIFSKKPSSDSRRANVPEGVWTKCTACEQVLYRDELKRHLEVCPKCGHHMRIDARERLEYLLDKDSMTEIAADLEPKDILKFKDLKKYKDRLSAAQKDTGEKDALVAMSGTLYGMPIVAAASNFAFMGGSMGSVVGAKFVQAAEEAIEKNCPFVCFSASGGARMQEALLSLMQMAKTSAVLAKMKEKGVPFISVLTDPTLGGVSASFAMLGDLNIAEPKALIGFAGPRVIEQTVREKLPEGFQRAEFLLEHGAIDMIIQRSEMREKLASILSKLMNKPSPFLEPEIIAD</sequence>
<organism>
    <name type="scientific">Actinobacillus succinogenes (strain ATCC 55618 / DSM 22257 / CCUG 43843 / 130Z)</name>
    <dbReference type="NCBI Taxonomy" id="339671"/>
    <lineage>
        <taxon>Bacteria</taxon>
        <taxon>Pseudomonadati</taxon>
        <taxon>Pseudomonadota</taxon>
        <taxon>Gammaproteobacteria</taxon>
        <taxon>Pasteurellales</taxon>
        <taxon>Pasteurellaceae</taxon>
        <taxon>Actinobacillus</taxon>
    </lineage>
</organism>
<keyword id="KW-0067">ATP-binding</keyword>
<keyword id="KW-0963">Cytoplasm</keyword>
<keyword id="KW-0275">Fatty acid biosynthesis</keyword>
<keyword id="KW-0276">Fatty acid metabolism</keyword>
<keyword id="KW-0444">Lipid biosynthesis</keyword>
<keyword id="KW-0443">Lipid metabolism</keyword>
<keyword id="KW-0479">Metal-binding</keyword>
<keyword id="KW-0547">Nucleotide-binding</keyword>
<keyword id="KW-1185">Reference proteome</keyword>
<keyword id="KW-0808">Transferase</keyword>
<keyword id="KW-0862">Zinc</keyword>
<keyword id="KW-0863">Zinc-finger</keyword>
<gene>
    <name evidence="1" type="primary">accD</name>
    <name type="ordered locus">Asuc_1381</name>
</gene>
<protein>
    <recommendedName>
        <fullName evidence="1">Acetyl-coenzyme A carboxylase carboxyl transferase subunit beta</fullName>
        <shortName evidence="1">ACCase subunit beta</shortName>
        <shortName evidence="1">Acetyl-CoA carboxylase carboxyltransferase subunit beta</shortName>
        <ecNumber evidence="1">2.1.3.15</ecNumber>
    </recommendedName>
</protein>
<name>ACCD_ACTSZ</name>
<evidence type="ECO:0000255" key="1">
    <source>
        <dbReference type="HAMAP-Rule" id="MF_01395"/>
    </source>
</evidence>
<evidence type="ECO:0000255" key="2">
    <source>
        <dbReference type="PROSITE-ProRule" id="PRU01136"/>
    </source>
</evidence>
<proteinExistence type="inferred from homology"/>
<comment type="function">
    <text evidence="1">Component of the acetyl coenzyme A carboxylase (ACC) complex. Biotin carboxylase (BC) catalyzes the carboxylation of biotin on its carrier protein (BCCP) and then the CO(2) group is transferred by the transcarboxylase to acetyl-CoA to form malonyl-CoA.</text>
</comment>
<comment type="catalytic activity">
    <reaction evidence="1">
        <text>N(6)-carboxybiotinyl-L-lysyl-[protein] + acetyl-CoA = N(6)-biotinyl-L-lysyl-[protein] + malonyl-CoA</text>
        <dbReference type="Rhea" id="RHEA:54728"/>
        <dbReference type="Rhea" id="RHEA-COMP:10505"/>
        <dbReference type="Rhea" id="RHEA-COMP:10506"/>
        <dbReference type="ChEBI" id="CHEBI:57288"/>
        <dbReference type="ChEBI" id="CHEBI:57384"/>
        <dbReference type="ChEBI" id="CHEBI:83144"/>
        <dbReference type="ChEBI" id="CHEBI:83145"/>
        <dbReference type="EC" id="2.1.3.15"/>
    </reaction>
</comment>
<comment type="cofactor">
    <cofactor evidence="1">
        <name>Zn(2+)</name>
        <dbReference type="ChEBI" id="CHEBI:29105"/>
    </cofactor>
    <text evidence="1">Binds 1 zinc ion per subunit.</text>
</comment>
<comment type="pathway">
    <text evidence="1">Lipid metabolism; malonyl-CoA biosynthesis; malonyl-CoA from acetyl-CoA: step 1/1.</text>
</comment>
<comment type="subunit">
    <text evidence="1">Acetyl-CoA carboxylase is a heterohexamer composed of biotin carboxyl carrier protein (AccB), biotin carboxylase (AccC) and two subunits each of ACCase subunit alpha (AccA) and ACCase subunit beta (AccD).</text>
</comment>
<comment type="subcellular location">
    <subcellularLocation>
        <location evidence="1">Cytoplasm</location>
    </subcellularLocation>
</comment>
<comment type="similarity">
    <text evidence="1">Belongs to the AccD/PCCB family.</text>
</comment>